<feature type="initiator methionine" description="Removed" evidence="1">
    <location>
        <position position="1"/>
    </location>
</feature>
<feature type="chain" id="PRO_0000209542" description="Probable tautomerase SA1195.1">
    <location>
        <begin position="2"/>
        <end position="61"/>
    </location>
</feature>
<feature type="active site" description="Proton acceptor; via imino nitrogen" evidence="1">
    <location>
        <position position="2"/>
    </location>
</feature>
<accession>P99132</accession>
<accession>Q99UB8</accession>
<reference key="1">
    <citation type="journal article" date="2001" name="Lancet">
        <title>Whole genome sequencing of meticillin-resistant Staphylococcus aureus.</title>
        <authorList>
            <person name="Kuroda M."/>
            <person name="Ohta T."/>
            <person name="Uchiyama I."/>
            <person name="Baba T."/>
            <person name="Yuzawa H."/>
            <person name="Kobayashi I."/>
            <person name="Cui L."/>
            <person name="Oguchi A."/>
            <person name="Aoki K."/>
            <person name="Nagai Y."/>
            <person name="Lian J.-Q."/>
            <person name="Ito T."/>
            <person name="Kanamori M."/>
            <person name="Matsumaru H."/>
            <person name="Maruyama A."/>
            <person name="Murakami H."/>
            <person name="Hosoyama A."/>
            <person name="Mizutani-Ui Y."/>
            <person name="Takahashi N.K."/>
            <person name="Sawano T."/>
            <person name="Inoue R."/>
            <person name="Kaito C."/>
            <person name="Sekimizu K."/>
            <person name="Hirakawa H."/>
            <person name="Kuhara S."/>
            <person name="Goto S."/>
            <person name="Yabuzaki J."/>
            <person name="Kanehisa M."/>
            <person name="Yamashita A."/>
            <person name="Oshima K."/>
            <person name="Furuya K."/>
            <person name="Yoshino C."/>
            <person name="Shiba T."/>
            <person name="Hattori M."/>
            <person name="Ogasawara N."/>
            <person name="Hayashi H."/>
            <person name="Hiramatsu K."/>
        </authorList>
    </citation>
    <scope>NUCLEOTIDE SEQUENCE [LARGE SCALE GENOMIC DNA]</scope>
    <source>
        <strain>N315</strain>
    </source>
</reference>
<reference key="2">
    <citation type="journal article" date="2005" name="J. Microbiol. Methods">
        <title>Correlation of proteomic and transcriptomic profiles of Staphylococcus aureus during the post-exponential phase of growth.</title>
        <authorList>
            <person name="Scherl A."/>
            <person name="Francois P."/>
            <person name="Bento M."/>
            <person name="Deshusses J.M."/>
            <person name="Charbonnier Y."/>
            <person name="Converset V."/>
            <person name="Huyghe A."/>
            <person name="Walter N."/>
            <person name="Hoogland C."/>
            <person name="Appel R.D."/>
            <person name="Sanchez J.-C."/>
            <person name="Zimmermann-Ivol C.G."/>
            <person name="Corthals G.L."/>
            <person name="Hochstrasser D.F."/>
            <person name="Schrenzel J."/>
        </authorList>
    </citation>
    <scope>IDENTIFICATION BY MASS SPECTROMETRY</scope>
    <source>
        <strain>N315</strain>
    </source>
</reference>
<reference key="3">
    <citation type="submission" date="2007-10" db="UniProtKB">
        <title>Shotgun proteomic analysis of total and membrane protein extracts of S. aureus strain N315.</title>
        <authorList>
            <person name="Vaezzadeh A.R."/>
            <person name="Deshusses J."/>
            <person name="Lescuyer P."/>
            <person name="Hochstrasser D.F."/>
        </authorList>
    </citation>
    <scope>IDENTIFICATION BY MASS SPECTROMETRY [LARGE SCALE ANALYSIS]</scope>
    <source>
        <strain>N315</strain>
    </source>
</reference>
<proteinExistence type="evidence at protein level"/>
<name>Y1195_STAAN</name>
<sequence>MPIVNVKLLEGRSDEQLKNLVSEVTDAVEKTTGANRQAIHVVIEEMKPNHYGVAGVRKSDQ</sequence>
<gene>
    <name type="ordered locus">SA1195.1</name>
    <name type="ORF">SAS044</name>
</gene>
<comment type="similarity">
    <text evidence="2">Belongs to the 4-oxalocrotonate tautomerase family.</text>
</comment>
<comment type="sequence caution" evidence="2">
    <conflict type="erroneous initiation">
        <sequence resource="EMBL-CDS" id="BAB42455"/>
    </conflict>
</comment>
<evidence type="ECO:0000250" key="1"/>
<evidence type="ECO:0000305" key="2"/>
<dbReference type="EC" id="5.3.2.-"/>
<dbReference type="EMBL" id="BA000018">
    <property type="protein sequence ID" value="BAB42455.1"/>
    <property type="status" value="ALT_INIT"/>
    <property type="molecule type" value="Genomic_DNA"/>
</dbReference>
<dbReference type="PIR" id="C89912">
    <property type="entry name" value="C89912"/>
</dbReference>
<dbReference type="RefSeq" id="WP_001123276.1">
    <property type="nucleotide sequence ID" value="NC_002745.2"/>
</dbReference>
<dbReference type="SMR" id="P99132"/>
<dbReference type="EnsemblBacteria" id="BAB42455">
    <property type="protein sequence ID" value="BAB42455"/>
    <property type="gene ID" value="BAB42455"/>
</dbReference>
<dbReference type="KEGG" id="sau:SAS044"/>
<dbReference type="HOGENOM" id="CLU_148073_5_1_9"/>
<dbReference type="GO" id="GO:0016853">
    <property type="term" value="F:isomerase activity"/>
    <property type="evidence" value="ECO:0007669"/>
    <property type="project" value="UniProtKB-KW"/>
</dbReference>
<dbReference type="CDD" id="cd00491">
    <property type="entry name" value="4Oxalocrotonate_Tautomerase"/>
    <property type="match status" value="1"/>
</dbReference>
<dbReference type="Gene3D" id="3.30.429.10">
    <property type="entry name" value="Macrophage Migration Inhibitory Factor"/>
    <property type="match status" value="1"/>
</dbReference>
<dbReference type="InterPro" id="IPR018191">
    <property type="entry name" value="4-OT"/>
</dbReference>
<dbReference type="InterPro" id="IPR004370">
    <property type="entry name" value="4-OT-like_dom"/>
</dbReference>
<dbReference type="InterPro" id="IPR014347">
    <property type="entry name" value="Tautomerase/MIF_sf"/>
</dbReference>
<dbReference type="NCBIfam" id="NF002571">
    <property type="entry name" value="PRK02220.1"/>
    <property type="match status" value="1"/>
</dbReference>
<dbReference type="NCBIfam" id="TIGR00013">
    <property type="entry name" value="taut"/>
    <property type="match status" value="1"/>
</dbReference>
<dbReference type="PANTHER" id="PTHR35530:SF1">
    <property type="entry name" value="2-HYDROXYMUCONATE TAUTOMERASE"/>
    <property type="match status" value="1"/>
</dbReference>
<dbReference type="PANTHER" id="PTHR35530">
    <property type="entry name" value="TAUTOMERASE-RELATED"/>
    <property type="match status" value="1"/>
</dbReference>
<dbReference type="Pfam" id="PF01361">
    <property type="entry name" value="Tautomerase"/>
    <property type="match status" value="1"/>
</dbReference>
<dbReference type="SUPFAM" id="SSF55331">
    <property type="entry name" value="Tautomerase/MIF"/>
    <property type="match status" value="1"/>
</dbReference>
<protein>
    <recommendedName>
        <fullName>Probable tautomerase SA1195.1</fullName>
        <ecNumber>5.3.2.-</ecNumber>
    </recommendedName>
</protein>
<organism>
    <name type="scientific">Staphylococcus aureus (strain N315)</name>
    <dbReference type="NCBI Taxonomy" id="158879"/>
    <lineage>
        <taxon>Bacteria</taxon>
        <taxon>Bacillati</taxon>
        <taxon>Bacillota</taxon>
        <taxon>Bacilli</taxon>
        <taxon>Bacillales</taxon>
        <taxon>Staphylococcaceae</taxon>
        <taxon>Staphylococcus</taxon>
    </lineage>
</organism>
<keyword id="KW-0413">Isomerase</keyword>